<organismHost>
    <name type="scientific">Ornithodoros</name>
    <name type="common">relapsing fever ticks</name>
    <dbReference type="NCBI Taxonomy" id="6937"/>
</organismHost>
<organismHost>
    <name type="scientific">Phacochoerus aethiopicus</name>
    <name type="common">Warthog</name>
    <dbReference type="NCBI Taxonomy" id="85517"/>
</organismHost>
<organismHost>
    <name type="scientific">Phacochoerus africanus</name>
    <name type="common">Warthog</name>
    <dbReference type="NCBI Taxonomy" id="41426"/>
</organismHost>
<organismHost>
    <name type="scientific">Potamochoerus larvatus</name>
    <name type="common">Bushpig</name>
    <dbReference type="NCBI Taxonomy" id="273792"/>
</organismHost>
<organismHost>
    <name type="scientific">Sus scrofa</name>
    <name type="common">Pig</name>
    <dbReference type="NCBI Taxonomy" id="9823"/>
</organismHost>
<accession>P0CAD9</accession>
<feature type="chain" id="PRO_0000373645" description="Uncharacterized protein F317L">
    <location>
        <begin position="1"/>
        <end position="316"/>
    </location>
</feature>
<gene>
    <name type="ordered locus">Ken-055</name>
</gene>
<dbReference type="EMBL" id="AY261360">
    <property type="status" value="NOT_ANNOTATED_CDS"/>
    <property type="molecule type" value="Genomic_DNA"/>
</dbReference>
<dbReference type="Proteomes" id="UP000000861">
    <property type="component" value="Segment"/>
</dbReference>
<dbReference type="GO" id="GO:0044423">
    <property type="term" value="C:virion component"/>
    <property type="evidence" value="ECO:0007669"/>
    <property type="project" value="UniProtKB-KW"/>
</dbReference>
<keyword id="KW-0426">Late protein</keyword>
<keyword id="KW-0946">Virion</keyword>
<reference key="1">
    <citation type="submission" date="2003-03" db="EMBL/GenBank/DDBJ databases">
        <title>African swine fever virus genomes.</title>
        <authorList>
            <person name="Kutish G.F."/>
            <person name="Rock D.L."/>
        </authorList>
    </citation>
    <scope>NUCLEOTIDE SEQUENCE [LARGE SCALE GENOMIC DNA]</scope>
</reference>
<sequence>MVETQMDKLGFLLNHIGKQITTKVLSNAHITQNMKEIILEKDSVDGGAAKNVSKGKSSPKEKKHWTEFESWEQLSKSKRSFKEYWAERNEIVNTLLLNWDNVRGALKKFLNDDREWCGRINMINGVPEIVEIIPSPYKAGENIYFGSEAMIPAEIYSRVANKPAMFVFHTHPNLGSCCGGMPSICDISTTLRYLLMGWTAGHLIISSNQVGMLTVDKRIIIDLWANENPRWLMAQKILDIFMMLTSRRSLVHPWTLRDLKKILQDYGIEYIIFPSNDFFIYEDERLLMFSKKWTNFFTLHELLDDLETIETKASST</sequence>
<evidence type="ECO:0000250" key="1">
    <source>
        <dbReference type="UniProtKB" id="Q65144"/>
    </source>
</evidence>
<evidence type="ECO:0000305" key="2"/>
<proteinExistence type="inferred from homology"/>
<comment type="subcellular location">
    <subcellularLocation>
        <location evidence="1">Virion</location>
    </subcellularLocation>
</comment>
<comment type="induction">
    <text evidence="2">Expressed in the late phase of the viral replicative cycle.</text>
</comment>
<comment type="similarity">
    <text evidence="2">Belongs to the asfivirus F317L family.</text>
</comment>
<name>VF317_ASFK5</name>
<organism>
    <name type="scientific">African swine fever virus (isolate Pig/Kenya/KEN-50/1950)</name>
    <name type="common">ASFV</name>
    <dbReference type="NCBI Taxonomy" id="561445"/>
    <lineage>
        <taxon>Viruses</taxon>
        <taxon>Varidnaviria</taxon>
        <taxon>Bamfordvirae</taxon>
        <taxon>Nucleocytoviricota</taxon>
        <taxon>Pokkesviricetes</taxon>
        <taxon>Asfuvirales</taxon>
        <taxon>Asfarviridae</taxon>
        <taxon>Asfivirus</taxon>
        <taxon>African swine fever virus</taxon>
    </lineage>
</organism>
<protein>
    <recommendedName>
        <fullName>Uncharacterized protein F317L</fullName>
        <shortName>pF317L</shortName>
    </recommendedName>
</protein>